<name>CRVP_NAJMO</name>
<dbReference type="SMR" id="P0DL16"/>
<dbReference type="GO" id="GO:0005576">
    <property type="term" value="C:extracellular region"/>
    <property type="evidence" value="ECO:0007669"/>
    <property type="project" value="UniProtKB-SubCell"/>
</dbReference>
<dbReference type="GO" id="GO:0005246">
    <property type="term" value="F:calcium channel regulator activity"/>
    <property type="evidence" value="ECO:0007669"/>
    <property type="project" value="UniProtKB-KW"/>
</dbReference>
<dbReference type="GO" id="GO:0015459">
    <property type="term" value="F:potassium channel regulator activity"/>
    <property type="evidence" value="ECO:0007669"/>
    <property type="project" value="UniProtKB-KW"/>
</dbReference>
<dbReference type="GO" id="GO:0090729">
    <property type="term" value="F:toxin activity"/>
    <property type="evidence" value="ECO:0007669"/>
    <property type="project" value="UniProtKB-KW"/>
</dbReference>
<accession>P0DL16</accession>
<feature type="chain" id="PRO_0000422146" description="Cysteine-rich venom protein mossambin">
    <location>
        <begin position="1"/>
        <end position="30" status="greater than"/>
    </location>
</feature>
<feature type="region of interest" description="Disordered" evidence="2">
    <location>
        <begin position="1"/>
        <end position="30"/>
    </location>
</feature>
<feature type="non-terminal residue">
    <location>
        <position position="30"/>
    </location>
</feature>
<proteinExistence type="evidence at protein level"/>
<organism>
    <name type="scientific">Naja mossambica</name>
    <name type="common">Mozambique spitting cobra</name>
    <dbReference type="NCBI Taxonomy" id="8644"/>
    <lineage>
        <taxon>Eukaryota</taxon>
        <taxon>Metazoa</taxon>
        <taxon>Chordata</taxon>
        <taxon>Craniata</taxon>
        <taxon>Vertebrata</taxon>
        <taxon>Euteleostomi</taxon>
        <taxon>Lepidosauria</taxon>
        <taxon>Squamata</taxon>
        <taxon>Bifurcata</taxon>
        <taxon>Unidentata</taxon>
        <taxon>Episquamata</taxon>
        <taxon>Toxicofera</taxon>
        <taxon>Serpentes</taxon>
        <taxon>Colubroidea</taxon>
        <taxon>Elapidae</taxon>
        <taxon>Elapinae</taxon>
        <taxon>Naja</taxon>
    </lineage>
</organism>
<keyword id="KW-0108">Calcium channel impairing toxin</keyword>
<keyword id="KW-1221">Calcium-activated potassium channel impairing toxin</keyword>
<keyword id="KW-0903">Direct protein sequencing</keyword>
<keyword id="KW-1015">Disulfide bond</keyword>
<keyword id="KW-0872">Ion channel impairing toxin</keyword>
<keyword id="KW-0632">Potassium channel impairing toxin</keyword>
<keyword id="KW-1219">Ryanodine-sensitive calcium-release channel impairing toxin</keyword>
<keyword id="KW-0964">Secreted</keyword>
<keyword id="KW-0800">Toxin</keyword>
<keyword id="KW-1220">Voltage-gated potassium channel impairing toxin</keyword>
<comment type="function">
    <text evidence="1">Inhibits calcium-activated potassium channels (KCa), voltage-gated potassium channel (Kv), and the calcium release channel/ryanodine receptor (RyR).</text>
</comment>
<comment type="subcellular location">
    <subcellularLocation>
        <location>Secreted</location>
    </subcellularLocation>
</comment>
<comment type="tissue specificity">
    <text>Expressed by the venom gland.</text>
</comment>
<comment type="PTM">
    <text evidence="1">Contains 8 disulfide bonds.</text>
</comment>
<comment type="similarity">
    <text evidence="3">Belongs to the CRISP family.</text>
</comment>
<evidence type="ECO:0000250" key="1"/>
<evidence type="ECO:0000256" key="2">
    <source>
        <dbReference type="SAM" id="MobiDB-lite"/>
    </source>
</evidence>
<evidence type="ECO:0000305" key="3"/>
<reference key="1">
    <citation type="journal article" date="2009" name="J. Biochem.">
        <title>Structural divergence of cysteine-rich secretory proteins in snake venoms.</title>
        <authorList>
            <person name="Matsunaga Y."/>
            <person name="Yamazaki Y."/>
            <person name="Hyodo F."/>
            <person name="Sugiyama Y."/>
            <person name="Nozaki M."/>
            <person name="Morita T."/>
        </authorList>
    </citation>
    <scope>PROTEIN SEQUENCE</scope>
    <source>
        <tissue>Venom</tissue>
    </source>
</reference>
<protein>
    <recommendedName>
        <fullName>Cysteine-rich venom protein mossambin</fullName>
        <shortName>CRVP</shortName>
    </recommendedName>
</protein>
<sequence>NVDFNSESTRRKKKQNEIVDLHNSLRRTVN</sequence>